<protein>
    <recommendedName>
        <fullName evidence="2">Probable translation initiation factor IF-2</fullName>
    </recommendedName>
</protein>
<sequence length="597" mass="66657">MKKIRQPIIAVLGHVDHGKTSLLDRIRNTHVAEKEAGGITQHIGATEVPIDVVKQLAGPLLSLWKGEIKLPGLLFIDTPGHEAFTSLRARGGSLADLAILIIDVNEGFQPQTLESIEILRKYKTPFVVAANKIDRIKGWKVVENEPFLVNIKKQDQRAQQDLETKLWELIGKFYELGFQVNRFDRVKDFRKELAIIPISAKYGIGVPELLVLISGLAQKYLEEKLKIEVEGPARGTILEVREEIGFGTTIDVIIYDGTLRKDDTIVVGGKDKAIVTKIRALLKPKPLDEIRDPRYKFDHVNEVSASAGIKIAAPDLEEALAGSPVIAVRDEEELKRARREILEQIKSVIISTDKVGVIVKADTIGSLEALSKELHEKNIPIRKADVGNISKTDVMEALSVKEEEPFYGVVIGFNVKVNEDAEEVAKAKNIPLFVNNIIYKLIEDYEAWIKAEEEKKKKEILANTKFPGVIKLFPDERYVFRRSHPAIVGIEVLEGRIKPGYPLIKQNGDKVGVIKSIKSKEDFLQEAKKGDQVAVAIEGAIVGRHIHPGEILYVDISKDDAIRLVKELRDMLDDTDIEALKNTAKVKAQKDPFWGAL</sequence>
<proteinExistence type="inferred from homology"/>
<organism>
    <name type="scientific">Thermococcus sibiricus (strain DSM 12597 / MM 739)</name>
    <dbReference type="NCBI Taxonomy" id="604354"/>
    <lineage>
        <taxon>Archaea</taxon>
        <taxon>Methanobacteriati</taxon>
        <taxon>Methanobacteriota</taxon>
        <taxon>Thermococci</taxon>
        <taxon>Thermococcales</taxon>
        <taxon>Thermococcaceae</taxon>
        <taxon>Thermococcus</taxon>
    </lineage>
</organism>
<evidence type="ECO:0000250" key="1"/>
<evidence type="ECO:0000255" key="2">
    <source>
        <dbReference type="HAMAP-Rule" id="MF_00100"/>
    </source>
</evidence>
<name>IF2P_THESM</name>
<feature type="chain" id="PRO_1000202786" description="Probable translation initiation factor IF-2">
    <location>
        <begin position="1"/>
        <end position="597"/>
    </location>
</feature>
<feature type="domain" description="tr-type G">
    <location>
        <begin position="4"/>
        <end position="221"/>
    </location>
</feature>
<feature type="region of interest" description="G1" evidence="1">
    <location>
        <begin position="13"/>
        <end position="20"/>
    </location>
</feature>
<feature type="region of interest" description="G2" evidence="1">
    <location>
        <begin position="38"/>
        <end position="42"/>
    </location>
</feature>
<feature type="region of interest" description="G3" evidence="1">
    <location>
        <begin position="77"/>
        <end position="80"/>
    </location>
</feature>
<feature type="region of interest" description="G4" evidence="1">
    <location>
        <begin position="131"/>
        <end position="134"/>
    </location>
</feature>
<feature type="region of interest" description="G5" evidence="1">
    <location>
        <begin position="199"/>
        <end position="201"/>
    </location>
</feature>
<feature type="binding site" evidence="2">
    <location>
        <begin position="13"/>
        <end position="20"/>
    </location>
    <ligand>
        <name>GTP</name>
        <dbReference type="ChEBI" id="CHEBI:37565"/>
    </ligand>
</feature>
<feature type="binding site" evidence="2">
    <location>
        <begin position="77"/>
        <end position="81"/>
    </location>
    <ligand>
        <name>GTP</name>
        <dbReference type="ChEBI" id="CHEBI:37565"/>
    </ligand>
</feature>
<feature type="binding site" evidence="2">
    <location>
        <begin position="131"/>
        <end position="134"/>
    </location>
    <ligand>
        <name>GTP</name>
        <dbReference type="ChEBI" id="CHEBI:37565"/>
    </ligand>
</feature>
<accession>C6A1V3</accession>
<keyword id="KW-0342">GTP-binding</keyword>
<keyword id="KW-0396">Initiation factor</keyword>
<keyword id="KW-0547">Nucleotide-binding</keyword>
<keyword id="KW-0648">Protein biosynthesis</keyword>
<keyword id="KW-1185">Reference proteome</keyword>
<gene>
    <name evidence="2" type="primary">infB</name>
    <name type="ordered locus">TSIB_0532</name>
</gene>
<comment type="function">
    <text evidence="2">Function in general translation initiation by promoting the binding of the formylmethionine-tRNA to ribosomes. Seems to function along with eIF-2.</text>
</comment>
<comment type="similarity">
    <text evidence="2">Belongs to the TRAFAC class translation factor GTPase superfamily. Classic translation factor GTPase family. IF-2 subfamily.</text>
</comment>
<reference key="1">
    <citation type="journal article" date="2009" name="Appl. Environ. Microbiol.">
        <title>Metabolic versatility and indigenous origin of the archaeon Thermococcus sibiricus, isolated from a siberian oil reservoir, as revealed by genome analysis.</title>
        <authorList>
            <person name="Mardanov A.V."/>
            <person name="Ravin N.V."/>
            <person name="Svetlitchnyi V.A."/>
            <person name="Beletsky A.V."/>
            <person name="Miroshnichenko M.L."/>
            <person name="Bonch-Osmolovskaya E.A."/>
            <person name="Skryabin K.G."/>
        </authorList>
    </citation>
    <scope>NUCLEOTIDE SEQUENCE [LARGE SCALE GENOMIC DNA]</scope>
    <source>
        <strain>DSM 12597 / MM 739</strain>
    </source>
</reference>
<dbReference type="EMBL" id="CP001463">
    <property type="protein sequence ID" value="ACS89598.1"/>
    <property type="molecule type" value="Genomic_DNA"/>
</dbReference>
<dbReference type="RefSeq" id="WP_015848818.1">
    <property type="nucleotide sequence ID" value="NC_012883.1"/>
</dbReference>
<dbReference type="SMR" id="C6A1V3"/>
<dbReference type="STRING" id="604354.TSIB_0532"/>
<dbReference type="GeneID" id="8095520"/>
<dbReference type="KEGG" id="tsi:TSIB_0532"/>
<dbReference type="eggNOG" id="arCOG01560">
    <property type="taxonomic scope" value="Archaea"/>
</dbReference>
<dbReference type="HOGENOM" id="CLU_002656_3_3_2"/>
<dbReference type="OrthoDB" id="30957at2157"/>
<dbReference type="Proteomes" id="UP000009079">
    <property type="component" value="Chromosome"/>
</dbReference>
<dbReference type="GO" id="GO:0005737">
    <property type="term" value="C:cytoplasm"/>
    <property type="evidence" value="ECO:0007669"/>
    <property type="project" value="TreeGrafter"/>
</dbReference>
<dbReference type="GO" id="GO:0005525">
    <property type="term" value="F:GTP binding"/>
    <property type="evidence" value="ECO:0007669"/>
    <property type="project" value="UniProtKB-KW"/>
</dbReference>
<dbReference type="GO" id="GO:0003924">
    <property type="term" value="F:GTPase activity"/>
    <property type="evidence" value="ECO:0007669"/>
    <property type="project" value="UniProtKB-UniRule"/>
</dbReference>
<dbReference type="GO" id="GO:0003743">
    <property type="term" value="F:translation initiation factor activity"/>
    <property type="evidence" value="ECO:0007669"/>
    <property type="project" value="UniProtKB-UniRule"/>
</dbReference>
<dbReference type="CDD" id="cd03703">
    <property type="entry name" value="aeIF5B_II"/>
    <property type="match status" value="1"/>
</dbReference>
<dbReference type="CDD" id="cd16266">
    <property type="entry name" value="IF2_aeIF5B_IV"/>
    <property type="match status" value="1"/>
</dbReference>
<dbReference type="CDD" id="cd01887">
    <property type="entry name" value="IF2_eIF5B"/>
    <property type="match status" value="1"/>
</dbReference>
<dbReference type="FunFam" id="3.40.50.300:FF:000112">
    <property type="entry name" value="Eukaryotic translation initiation factor 5B"/>
    <property type="match status" value="1"/>
</dbReference>
<dbReference type="FunFam" id="2.40.30.10:FF:000013">
    <property type="entry name" value="eukaryotic translation initiation factor 5B"/>
    <property type="match status" value="1"/>
</dbReference>
<dbReference type="FunFam" id="3.40.50.10050:FF:000009">
    <property type="entry name" value="Probable translation initiation factor IF-2"/>
    <property type="match status" value="1"/>
</dbReference>
<dbReference type="Gene3D" id="3.40.50.300">
    <property type="entry name" value="P-loop containing nucleotide triphosphate hydrolases"/>
    <property type="match status" value="1"/>
</dbReference>
<dbReference type="Gene3D" id="2.40.30.10">
    <property type="entry name" value="Translation factors"/>
    <property type="match status" value="2"/>
</dbReference>
<dbReference type="Gene3D" id="3.40.50.10050">
    <property type="entry name" value="Translation initiation factor IF- 2, domain 3"/>
    <property type="match status" value="1"/>
</dbReference>
<dbReference type="HAMAP" id="MF_00100_A">
    <property type="entry name" value="IF_2_A"/>
    <property type="match status" value="1"/>
</dbReference>
<dbReference type="InterPro" id="IPR004161">
    <property type="entry name" value="EFTu-like_2"/>
</dbReference>
<dbReference type="InterPro" id="IPR029459">
    <property type="entry name" value="EFTU-type"/>
</dbReference>
<dbReference type="InterPro" id="IPR027417">
    <property type="entry name" value="P-loop_NTPase"/>
</dbReference>
<dbReference type="InterPro" id="IPR005225">
    <property type="entry name" value="Small_GTP-bd"/>
</dbReference>
<dbReference type="InterPro" id="IPR000795">
    <property type="entry name" value="T_Tr_GTP-bd_dom"/>
</dbReference>
<dbReference type="InterPro" id="IPR004544">
    <property type="entry name" value="TF_aIF-2_arc"/>
</dbReference>
<dbReference type="InterPro" id="IPR015760">
    <property type="entry name" value="TIF_IF2"/>
</dbReference>
<dbReference type="InterPro" id="IPR023115">
    <property type="entry name" value="TIF_IF2_dom3"/>
</dbReference>
<dbReference type="InterPro" id="IPR036925">
    <property type="entry name" value="TIF_IF2_dom3_sf"/>
</dbReference>
<dbReference type="InterPro" id="IPR009000">
    <property type="entry name" value="Transl_B-barrel_sf"/>
</dbReference>
<dbReference type="NCBIfam" id="TIGR00491">
    <property type="entry name" value="aIF-2"/>
    <property type="match status" value="1"/>
</dbReference>
<dbReference type="NCBIfam" id="NF003078">
    <property type="entry name" value="PRK04004.1"/>
    <property type="match status" value="1"/>
</dbReference>
<dbReference type="NCBIfam" id="NF011418">
    <property type="entry name" value="PRK14845.1"/>
    <property type="match status" value="1"/>
</dbReference>
<dbReference type="NCBIfam" id="TIGR00231">
    <property type="entry name" value="small_GTP"/>
    <property type="match status" value="1"/>
</dbReference>
<dbReference type="PANTHER" id="PTHR43381:SF4">
    <property type="entry name" value="EUKARYOTIC TRANSLATION INITIATION FACTOR 5B"/>
    <property type="match status" value="1"/>
</dbReference>
<dbReference type="PANTHER" id="PTHR43381">
    <property type="entry name" value="TRANSLATION INITIATION FACTOR IF-2-RELATED"/>
    <property type="match status" value="1"/>
</dbReference>
<dbReference type="Pfam" id="PF00009">
    <property type="entry name" value="GTP_EFTU"/>
    <property type="match status" value="1"/>
</dbReference>
<dbReference type="Pfam" id="PF03144">
    <property type="entry name" value="GTP_EFTU_D2"/>
    <property type="match status" value="1"/>
</dbReference>
<dbReference type="Pfam" id="PF14578">
    <property type="entry name" value="GTP_EFTU_D4"/>
    <property type="match status" value="1"/>
</dbReference>
<dbReference type="Pfam" id="PF11987">
    <property type="entry name" value="IF-2"/>
    <property type="match status" value="1"/>
</dbReference>
<dbReference type="PRINTS" id="PR00315">
    <property type="entry name" value="ELONGATNFCT"/>
</dbReference>
<dbReference type="SUPFAM" id="SSF52156">
    <property type="entry name" value="Initiation factor IF2/eIF5b, domain 3"/>
    <property type="match status" value="1"/>
</dbReference>
<dbReference type="SUPFAM" id="SSF52540">
    <property type="entry name" value="P-loop containing nucleoside triphosphate hydrolases"/>
    <property type="match status" value="1"/>
</dbReference>
<dbReference type="SUPFAM" id="SSF50447">
    <property type="entry name" value="Translation proteins"/>
    <property type="match status" value="1"/>
</dbReference>
<dbReference type="PROSITE" id="PS51722">
    <property type="entry name" value="G_TR_2"/>
    <property type="match status" value="1"/>
</dbReference>